<organism>
    <name type="scientific">Salmonella typhi</name>
    <dbReference type="NCBI Taxonomy" id="90370"/>
    <lineage>
        <taxon>Bacteria</taxon>
        <taxon>Pseudomonadati</taxon>
        <taxon>Pseudomonadota</taxon>
        <taxon>Gammaproteobacteria</taxon>
        <taxon>Enterobacterales</taxon>
        <taxon>Enterobacteriaceae</taxon>
        <taxon>Salmonella</taxon>
    </lineage>
</organism>
<name>TRPC_SALTI</name>
<reference key="1">
    <citation type="journal article" date="2001" name="Nature">
        <title>Complete genome sequence of a multiple drug resistant Salmonella enterica serovar Typhi CT18.</title>
        <authorList>
            <person name="Parkhill J."/>
            <person name="Dougan G."/>
            <person name="James K.D."/>
            <person name="Thomson N.R."/>
            <person name="Pickard D."/>
            <person name="Wain J."/>
            <person name="Churcher C.M."/>
            <person name="Mungall K.L."/>
            <person name="Bentley S.D."/>
            <person name="Holden M.T.G."/>
            <person name="Sebaihia M."/>
            <person name="Baker S."/>
            <person name="Basham D."/>
            <person name="Brooks K."/>
            <person name="Chillingworth T."/>
            <person name="Connerton P."/>
            <person name="Cronin A."/>
            <person name="Davis P."/>
            <person name="Davies R.M."/>
            <person name="Dowd L."/>
            <person name="White N."/>
            <person name="Farrar J."/>
            <person name="Feltwell T."/>
            <person name="Hamlin N."/>
            <person name="Haque A."/>
            <person name="Hien T.T."/>
            <person name="Holroyd S."/>
            <person name="Jagels K."/>
            <person name="Krogh A."/>
            <person name="Larsen T.S."/>
            <person name="Leather S."/>
            <person name="Moule S."/>
            <person name="O'Gaora P."/>
            <person name="Parry C."/>
            <person name="Quail M.A."/>
            <person name="Rutherford K.M."/>
            <person name="Simmonds M."/>
            <person name="Skelton J."/>
            <person name="Stevens K."/>
            <person name="Whitehead S."/>
            <person name="Barrell B.G."/>
        </authorList>
    </citation>
    <scope>NUCLEOTIDE SEQUENCE [LARGE SCALE GENOMIC DNA]</scope>
    <source>
        <strain>CT18</strain>
    </source>
</reference>
<reference key="2">
    <citation type="journal article" date="2003" name="J. Bacteriol.">
        <title>Comparative genomics of Salmonella enterica serovar Typhi strains Ty2 and CT18.</title>
        <authorList>
            <person name="Deng W."/>
            <person name="Liou S.-R."/>
            <person name="Plunkett G. III"/>
            <person name="Mayhew G.F."/>
            <person name="Rose D.J."/>
            <person name="Burland V."/>
            <person name="Kodoyianni V."/>
            <person name="Schwartz D.C."/>
            <person name="Blattner F.R."/>
        </authorList>
    </citation>
    <scope>NUCLEOTIDE SEQUENCE [LARGE SCALE GENOMIC DNA]</scope>
    <source>
        <strain>ATCC 700931 / Ty2</strain>
    </source>
</reference>
<sequence>MQTVLAKIVADKAIWVEARKQQQPLASFQNEIQPSTRHFYDALQGARTAFILECKKASPSKGVIRDDFDPARIASIYQHYASAISVLTDEKYFQGSFDFLPVVSQSAPQPILCKDFIIDPYQIYLARYYQADACLLMLSVLDDEQYRQLSAVAHSLKMGVLTEISNDEERERAIALGAKVVGINNRDLRDLSIDLNRTRQLAPKLGHGVTVISESGINTYGQVRELSHFANGFLIGSALMAHDDLNAAVRRVLLGENKVCGLTRAQDAKAACDAGAIYGGLIFVPSSPRAVSVEQAREVISGAPLQYVGVFKNADIADVCQKAAVLSLSAVQLHGSEDQAYVNALREALPRNVQIWKALSVSNALPARDYHHVDKYIFDNGQGGSGQRFDWSLLQGQPLDDVLLAGGLAADNCVQAAQVGCAGLDFNSGVESQPGIKDARLLASVFQTLRAY</sequence>
<evidence type="ECO:0000250" key="1"/>
<evidence type="ECO:0000305" key="2"/>
<accession>Q8Z7D9</accession>
<dbReference type="EC" id="4.1.1.48"/>
<dbReference type="EC" id="5.3.1.24"/>
<dbReference type="EMBL" id="AL513382">
    <property type="protein sequence ID" value="CAD08407.1"/>
    <property type="molecule type" value="Genomic_DNA"/>
</dbReference>
<dbReference type="EMBL" id="AE014613">
    <property type="protein sequence ID" value="AAO69264.1"/>
    <property type="molecule type" value="Genomic_DNA"/>
</dbReference>
<dbReference type="RefSeq" id="NP_455773.1">
    <property type="nucleotide sequence ID" value="NC_003198.1"/>
</dbReference>
<dbReference type="SMR" id="Q8Z7D9"/>
<dbReference type="STRING" id="220341.gene:17585287"/>
<dbReference type="KEGG" id="stt:t1637"/>
<dbReference type="KEGG" id="sty:STY1326"/>
<dbReference type="PATRIC" id="fig|220341.7.peg.1333"/>
<dbReference type="eggNOG" id="COG0134">
    <property type="taxonomic scope" value="Bacteria"/>
</dbReference>
<dbReference type="eggNOG" id="COG0135">
    <property type="taxonomic scope" value="Bacteria"/>
</dbReference>
<dbReference type="HOGENOM" id="CLU_007713_0_0_6"/>
<dbReference type="OMA" id="NVKTPFM"/>
<dbReference type="UniPathway" id="UPA00035">
    <property type="reaction ID" value="UER00042"/>
</dbReference>
<dbReference type="UniPathway" id="UPA00035">
    <property type="reaction ID" value="UER00043"/>
</dbReference>
<dbReference type="Proteomes" id="UP000000541">
    <property type="component" value="Chromosome"/>
</dbReference>
<dbReference type="Proteomes" id="UP000002670">
    <property type="component" value="Chromosome"/>
</dbReference>
<dbReference type="GO" id="GO:0004425">
    <property type="term" value="F:indole-3-glycerol-phosphate synthase activity"/>
    <property type="evidence" value="ECO:0007669"/>
    <property type="project" value="UniProtKB-UniRule"/>
</dbReference>
<dbReference type="GO" id="GO:0004640">
    <property type="term" value="F:phosphoribosylanthranilate isomerase activity"/>
    <property type="evidence" value="ECO:0007669"/>
    <property type="project" value="UniProtKB-UniRule"/>
</dbReference>
<dbReference type="GO" id="GO:0000162">
    <property type="term" value="P:L-tryptophan biosynthetic process"/>
    <property type="evidence" value="ECO:0007669"/>
    <property type="project" value="UniProtKB-UniRule"/>
</dbReference>
<dbReference type="CDD" id="cd00331">
    <property type="entry name" value="IGPS"/>
    <property type="match status" value="1"/>
</dbReference>
<dbReference type="CDD" id="cd00405">
    <property type="entry name" value="PRAI"/>
    <property type="match status" value="1"/>
</dbReference>
<dbReference type="FunFam" id="3.20.20.70:FF:000024">
    <property type="entry name" value="Indole-3-glycerol phosphate synthase"/>
    <property type="match status" value="1"/>
</dbReference>
<dbReference type="FunFam" id="3.20.20.70:FF:000165">
    <property type="entry name" value="Multifunctional fusion protein"/>
    <property type="match status" value="1"/>
</dbReference>
<dbReference type="Gene3D" id="3.20.20.70">
    <property type="entry name" value="Aldolase class I"/>
    <property type="match status" value="2"/>
</dbReference>
<dbReference type="HAMAP" id="MF_00134_B">
    <property type="entry name" value="IGPS_B"/>
    <property type="match status" value="1"/>
</dbReference>
<dbReference type="HAMAP" id="MF_00135">
    <property type="entry name" value="PRAI"/>
    <property type="match status" value="1"/>
</dbReference>
<dbReference type="InterPro" id="IPR013785">
    <property type="entry name" value="Aldolase_TIM"/>
</dbReference>
<dbReference type="InterPro" id="IPR045186">
    <property type="entry name" value="Indole-3-glycerol_P_synth"/>
</dbReference>
<dbReference type="InterPro" id="IPR013798">
    <property type="entry name" value="Indole-3-glycerol_P_synth_dom"/>
</dbReference>
<dbReference type="InterPro" id="IPR001468">
    <property type="entry name" value="Indole-3-GlycerolPSynthase_CS"/>
</dbReference>
<dbReference type="InterPro" id="IPR001240">
    <property type="entry name" value="PRAI_dom"/>
</dbReference>
<dbReference type="InterPro" id="IPR011060">
    <property type="entry name" value="RibuloseP-bd_barrel"/>
</dbReference>
<dbReference type="NCBIfam" id="NF001377">
    <property type="entry name" value="PRK00278.2-4"/>
    <property type="match status" value="1"/>
</dbReference>
<dbReference type="NCBIfam" id="NF006945">
    <property type="entry name" value="PRK09427.1"/>
    <property type="match status" value="1"/>
</dbReference>
<dbReference type="PANTHER" id="PTHR22854:SF2">
    <property type="entry name" value="INDOLE-3-GLYCEROL-PHOSPHATE SYNTHASE"/>
    <property type="match status" value="1"/>
</dbReference>
<dbReference type="PANTHER" id="PTHR22854">
    <property type="entry name" value="TRYPTOPHAN BIOSYNTHESIS PROTEIN"/>
    <property type="match status" value="1"/>
</dbReference>
<dbReference type="Pfam" id="PF00218">
    <property type="entry name" value="IGPS"/>
    <property type="match status" value="1"/>
</dbReference>
<dbReference type="Pfam" id="PF00697">
    <property type="entry name" value="PRAI"/>
    <property type="match status" value="1"/>
</dbReference>
<dbReference type="SUPFAM" id="SSF51366">
    <property type="entry name" value="Ribulose-phoshate binding barrel"/>
    <property type="match status" value="2"/>
</dbReference>
<dbReference type="PROSITE" id="PS00614">
    <property type="entry name" value="IGPS"/>
    <property type="match status" value="1"/>
</dbReference>
<feature type="chain" id="PRO_0000154283" description="Tryptophan biosynthesis protein TrpCF">
    <location>
        <begin position="1"/>
        <end position="452"/>
    </location>
</feature>
<feature type="region of interest" description="Indole-3-glycerol phosphate synthase">
    <location>
        <begin position="1"/>
        <end position="256"/>
    </location>
</feature>
<feature type="region of interest" description="N-(5'-phosphoribosyl)anthranilate isomerase">
    <location>
        <begin position="257"/>
        <end position="452"/>
    </location>
</feature>
<gene>
    <name type="primary">trpC</name>
    <name type="ordered locus">STY1326</name>
    <name type="ordered locus">t1637</name>
</gene>
<comment type="function">
    <text evidence="1">Bifunctional enzyme that catalyzes two sequential steps of tryptophan biosynthetic pathway. The first reaction is catalyzed by the isomerase, coded by the TrpF domain; the second reaction is catalyzed by the synthase, coded by the TrpC domain (By similarity).</text>
</comment>
<comment type="catalytic activity">
    <reaction>
        <text>N-(5-phospho-beta-D-ribosyl)anthranilate = 1-(2-carboxyphenylamino)-1-deoxy-D-ribulose 5-phosphate</text>
        <dbReference type="Rhea" id="RHEA:21540"/>
        <dbReference type="ChEBI" id="CHEBI:18277"/>
        <dbReference type="ChEBI" id="CHEBI:58613"/>
        <dbReference type="EC" id="5.3.1.24"/>
    </reaction>
</comment>
<comment type="catalytic activity">
    <reaction>
        <text>1-(2-carboxyphenylamino)-1-deoxy-D-ribulose 5-phosphate + H(+) = (1S,2R)-1-C-(indol-3-yl)glycerol 3-phosphate + CO2 + H2O</text>
        <dbReference type="Rhea" id="RHEA:23476"/>
        <dbReference type="ChEBI" id="CHEBI:15377"/>
        <dbReference type="ChEBI" id="CHEBI:15378"/>
        <dbReference type="ChEBI" id="CHEBI:16526"/>
        <dbReference type="ChEBI" id="CHEBI:58613"/>
        <dbReference type="ChEBI" id="CHEBI:58866"/>
        <dbReference type="EC" id="4.1.1.48"/>
    </reaction>
</comment>
<comment type="pathway">
    <text>Amino-acid biosynthesis; L-tryptophan biosynthesis; L-tryptophan from chorismate: step 3/5.</text>
</comment>
<comment type="pathway">
    <text>Amino-acid biosynthesis; L-tryptophan biosynthesis; L-tryptophan from chorismate: step 4/5.</text>
</comment>
<comment type="subunit">
    <text evidence="1">Monomer.</text>
</comment>
<comment type="similarity">
    <text evidence="2">In the N-terminal section; belongs to the TrpC family.</text>
</comment>
<comment type="similarity">
    <text evidence="2">In the C-terminal section; belongs to the TrpF family.</text>
</comment>
<keyword id="KW-0028">Amino-acid biosynthesis</keyword>
<keyword id="KW-0057">Aromatic amino acid biosynthesis</keyword>
<keyword id="KW-0210">Decarboxylase</keyword>
<keyword id="KW-0413">Isomerase</keyword>
<keyword id="KW-0456">Lyase</keyword>
<keyword id="KW-0511">Multifunctional enzyme</keyword>
<keyword id="KW-0822">Tryptophan biosynthesis</keyword>
<proteinExistence type="inferred from homology"/>
<protein>
    <recommendedName>
        <fullName>Tryptophan biosynthesis protein TrpCF</fullName>
    </recommendedName>
    <domain>
        <recommendedName>
            <fullName>Indole-3-glycerol phosphate synthase</fullName>
            <shortName>IGPS</shortName>
            <ecNumber>4.1.1.48</ecNumber>
        </recommendedName>
    </domain>
    <domain>
        <recommendedName>
            <fullName>N-(5'-phospho-ribosyl)anthranilate isomerase</fullName>
            <shortName>PRAI</shortName>
            <ecNumber>5.3.1.24</ecNumber>
        </recommendedName>
    </domain>
</protein>